<keyword id="KW-0150">Chloroplast</keyword>
<keyword id="KW-0249">Electron transport</keyword>
<keyword id="KW-0349">Heme</keyword>
<keyword id="KW-0408">Iron</keyword>
<keyword id="KW-0472">Membrane</keyword>
<keyword id="KW-0479">Metal-binding</keyword>
<keyword id="KW-0602">Photosynthesis</keyword>
<keyword id="KW-0604">Photosystem II</keyword>
<keyword id="KW-0934">Plastid</keyword>
<keyword id="KW-1185">Reference proteome</keyword>
<keyword id="KW-0793">Thylakoid</keyword>
<keyword id="KW-0812">Transmembrane</keyword>
<keyword id="KW-1133">Transmembrane helix</keyword>
<keyword id="KW-0813">Transport</keyword>
<feature type="chain" id="PRO_0000233211" description="Cytochrome b559 subunit alpha">
    <location>
        <begin position="1"/>
        <end position="83"/>
    </location>
</feature>
<feature type="transmembrane region" description="Helical" evidence="1">
    <location>
        <begin position="21"/>
        <end position="35"/>
    </location>
</feature>
<feature type="binding site" description="axial binding residue" evidence="1">
    <location>
        <position position="23"/>
    </location>
    <ligand>
        <name>heme</name>
        <dbReference type="ChEBI" id="CHEBI:30413"/>
        <note>ligand shared with beta subunit</note>
    </ligand>
    <ligandPart>
        <name>Fe</name>
        <dbReference type="ChEBI" id="CHEBI:18248"/>
    </ligandPart>
</feature>
<dbReference type="EMBL" id="DQ317523">
    <property type="protein sequence ID" value="ABC25141.1"/>
    <property type="molecule type" value="Genomic_DNA"/>
</dbReference>
<dbReference type="RefSeq" id="YP_538781.1">
    <property type="nucleotide sequence ID" value="NC_007942.1"/>
</dbReference>
<dbReference type="SMR" id="Q2PMR7"/>
<dbReference type="FunCoup" id="Q2PMR7">
    <property type="interactions" value="42"/>
</dbReference>
<dbReference type="STRING" id="3847.Q2PMR7"/>
<dbReference type="PaxDb" id="3847-GLYMA12G36132.1"/>
<dbReference type="GeneID" id="3989313"/>
<dbReference type="KEGG" id="gmx:3989313"/>
<dbReference type="InParanoid" id="Q2PMR7"/>
<dbReference type="Proteomes" id="UP000008827">
    <property type="component" value="Chloroplast"/>
</dbReference>
<dbReference type="GO" id="GO:0009535">
    <property type="term" value="C:chloroplast thylakoid membrane"/>
    <property type="evidence" value="ECO:0007669"/>
    <property type="project" value="UniProtKB-SubCell"/>
</dbReference>
<dbReference type="GO" id="GO:0009539">
    <property type="term" value="C:photosystem II reaction center"/>
    <property type="evidence" value="ECO:0007669"/>
    <property type="project" value="InterPro"/>
</dbReference>
<dbReference type="GO" id="GO:0009055">
    <property type="term" value="F:electron transfer activity"/>
    <property type="evidence" value="ECO:0007669"/>
    <property type="project" value="UniProtKB-UniRule"/>
</dbReference>
<dbReference type="GO" id="GO:0020037">
    <property type="term" value="F:heme binding"/>
    <property type="evidence" value="ECO:0007669"/>
    <property type="project" value="InterPro"/>
</dbReference>
<dbReference type="GO" id="GO:0005506">
    <property type="term" value="F:iron ion binding"/>
    <property type="evidence" value="ECO:0007669"/>
    <property type="project" value="UniProtKB-UniRule"/>
</dbReference>
<dbReference type="GO" id="GO:0009767">
    <property type="term" value="P:photosynthetic electron transport chain"/>
    <property type="evidence" value="ECO:0007669"/>
    <property type="project" value="InterPro"/>
</dbReference>
<dbReference type="Gene3D" id="1.20.5.860">
    <property type="entry name" value="Photosystem II cytochrome b559, alpha subunit"/>
    <property type="match status" value="1"/>
</dbReference>
<dbReference type="HAMAP" id="MF_00642">
    <property type="entry name" value="PSII_PsbE"/>
    <property type="match status" value="1"/>
</dbReference>
<dbReference type="InterPro" id="IPR006217">
    <property type="entry name" value="PSII_cyt_b559_asu"/>
</dbReference>
<dbReference type="InterPro" id="IPR037025">
    <property type="entry name" value="PSII_cyt_b559_asu_sf"/>
</dbReference>
<dbReference type="InterPro" id="IPR006216">
    <property type="entry name" value="PSII_cyt_b559_CS"/>
</dbReference>
<dbReference type="InterPro" id="IPR013081">
    <property type="entry name" value="PSII_cyt_b559_N"/>
</dbReference>
<dbReference type="InterPro" id="IPR013082">
    <property type="entry name" value="PSII_cytb559_asu_lum"/>
</dbReference>
<dbReference type="NCBIfam" id="TIGR01332">
    <property type="entry name" value="cyt_b559_alpha"/>
    <property type="match status" value="1"/>
</dbReference>
<dbReference type="PANTHER" id="PTHR33391">
    <property type="entry name" value="CYTOCHROME B559 SUBUNIT BETA-RELATED"/>
    <property type="match status" value="1"/>
</dbReference>
<dbReference type="PANTHER" id="PTHR33391:SF9">
    <property type="entry name" value="CYTOCHROME B559 SUBUNIT BETA-RELATED"/>
    <property type="match status" value="1"/>
</dbReference>
<dbReference type="Pfam" id="PF00283">
    <property type="entry name" value="Cytochrom_B559"/>
    <property type="match status" value="1"/>
</dbReference>
<dbReference type="Pfam" id="PF00284">
    <property type="entry name" value="Cytochrom_B559a"/>
    <property type="match status" value="1"/>
</dbReference>
<dbReference type="PIRSF" id="PIRSF000036">
    <property type="entry name" value="PsbE"/>
    <property type="match status" value="1"/>
</dbReference>
<dbReference type="SUPFAM" id="SSF161045">
    <property type="entry name" value="Cytochrome b559 subunits"/>
    <property type="match status" value="1"/>
</dbReference>
<dbReference type="PROSITE" id="PS00537">
    <property type="entry name" value="CYTOCHROME_B559"/>
    <property type="match status" value="1"/>
</dbReference>
<evidence type="ECO:0000255" key="1">
    <source>
        <dbReference type="HAMAP-Rule" id="MF_00642"/>
    </source>
</evidence>
<proteinExistence type="inferred from homology"/>
<gene>
    <name evidence="1" type="primary">psbE</name>
</gene>
<name>PSBE_SOYBN</name>
<reference key="1">
    <citation type="journal article" date="2005" name="Plant Mol. Biol.">
        <title>Complete chloroplast genome sequence of Glycine max and comparative analyses with other legume genomes.</title>
        <authorList>
            <person name="Saski C."/>
            <person name="Lee S.-B."/>
            <person name="Daniell H."/>
            <person name="Wood T.C."/>
            <person name="Tomkins J."/>
            <person name="Kim H.-G."/>
            <person name="Jansen R.K."/>
        </authorList>
    </citation>
    <scope>NUCLEOTIDE SEQUENCE [LARGE SCALE GENOMIC DNA]</scope>
    <source>
        <strain>cv. PI 437654</strain>
    </source>
</reference>
<comment type="function">
    <text evidence="1">This b-type cytochrome is tightly associated with the reaction center of photosystem II (PSII). PSII is a light-driven water:plastoquinone oxidoreductase that uses light energy to abstract electrons from H(2)O, generating O(2) and a proton gradient subsequently used for ATP formation. It consists of a core antenna complex that captures photons, and an electron transfer chain that converts photonic excitation into a charge separation.</text>
</comment>
<comment type="cofactor">
    <cofactor evidence="1">
        <name>heme b</name>
        <dbReference type="ChEBI" id="CHEBI:60344"/>
    </cofactor>
    <text evidence="1">With its partner (PsbF) binds heme. PSII binds additional chlorophylls, carotenoids and specific lipids.</text>
</comment>
<comment type="subunit">
    <text evidence="1">Heterodimer of an alpha subunit and a beta subunit. PSII is composed of 1 copy each of membrane proteins PsbA, PsbB, PsbC, PsbD, PsbE, PsbF, PsbH, PsbI, PsbJ, PsbK, PsbL, PsbM, PsbT, PsbX, PsbY, PsbZ, Psb30/Ycf12, at least 3 peripheral proteins of the oxygen-evolving complex and a large number of cofactors. It forms dimeric complexes.</text>
</comment>
<comment type="subcellular location">
    <subcellularLocation>
        <location evidence="1">Plastid</location>
        <location evidence="1">Chloroplast thylakoid membrane</location>
        <topology evidence="1">Single-pass membrane protein</topology>
    </subcellularLocation>
</comment>
<comment type="similarity">
    <text evidence="1">Belongs to the PsbE/PsbF family.</text>
</comment>
<organism>
    <name type="scientific">Glycine max</name>
    <name type="common">Soybean</name>
    <name type="synonym">Glycine hispida</name>
    <dbReference type="NCBI Taxonomy" id="3847"/>
    <lineage>
        <taxon>Eukaryota</taxon>
        <taxon>Viridiplantae</taxon>
        <taxon>Streptophyta</taxon>
        <taxon>Embryophyta</taxon>
        <taxon>Tracheophyta</taxon>
        <taxon>Spermatophyta</taxon>
        <taxon>Magnoliopsida</taxon>
        <taxon>eudicotyledons</taxon>
        <taxon>Gunneridae</taxon>
        <taxon>Pentapetalae</taxon>
        <taxon>rosids</taxon>
        <taxon>fabids</taxon>
        <taxon>Fabales</taxon>
        <taxon>Fabaceae</taxon>
        <taxon>Papilionoideae</taxon>
        <taxon>50 kb inversion clade</taxon>
        <taxon>NPAAA clade</taxon>
        <taxon>indigoferoid/millettioid clade</taxon>
        <taxon>Phaseoleae</taxon>
        <taxon>Glycine</taxon>
        <taxon>Glycine subgen. Soja</taxon>
    </lineage>
</organism>
<sequence length="83" mass="9411">MSGSTGERSFADIITSIRYWIIHSITIPSLFIAGWLFVSTGLAYDVFGSPRPNEYFTESRQGIPLITGRFDPLEQLDEFSRSF</sequence>
<accession>Q2PMR7</accession>
<geneLocation type="chloroplast"/>
<protein>
    <recommendedName>
        <fullName evidence="1">Cytochrome b559 subunit alpha</fullName>
    </recommendedName>
    <alternativeName>
        <fullName evidence="1">PSII reaction center subunit V</fullName>
    </alternativeName>
</protein>